<comment type="function">
    <text evidence="1">Binds the 23S rRNA.</text>
</comment>
<comment type="cofactor">
    <cofactor evidence="1">
        <name>Zn(2+)</name>
        <dbReference type="ChEBI" id="CHEBI:29105"/>
    </cofactor>
    <text evidence="1">Binds 1 zinc ion per subunit.</text>
</comment>
<comment type="subunit">
    <text evidence="1">Part of the 50S ribosomal subunit.</text>
</comment>
<comment type="similarity">
    <text evidence="1">Belongs to the bacterial ribosomal protein bL31 family. Type A subfamily.</text>
</comment>
<organism>
    <name type="scientific">Dictyoglomus thermophilum (strain ATCC 35947 / DSM 3960 / H-6-12)</name>
    <dbReference type="NCBI Taxonomy" id="309799"/>
    <lineage>
        <taxon>Bacteria</taxon>
        <taxon>Pseudomonadati</taxon>
        <taxon>Dictyoglomota</taxon>
        <taxon>Dictyoglomia</taxon>
        <taxon>Dictyoglomales</taxon>
        <taxon>Dictyoglomaceae</taxon>
        <taxon>Dictyoglomus</taxon>
    </lineage>
</organism>
<evidence type="ECO:0000255" key="1">
    <source>
        <dbReference type="HAMAP-Rule" id="MF_00501"/>
    </source>
</evidence>
<evidence type="ECO:0000305" key="2"/>
<feature type="chain" id="PRO_1000126609" description="Large ribosomal subunit protein bL31">
    <location>
        <begin position="1"/>
        <end position="68"/>
    </location>
</feature>
<feature type="binding site" evidence="1">
    <location>
        <position position="16"/>
    </location>
    <ligand>
        <name>Zn(2+)</name>
        <dbReference type="ChEBI" id="CHEBI:29105"/>
    </ligand>
</feature>
<feature type="binding site" evidence="1">
    <location>
        <position position="18"/>
    </location>
    <ligand>
        <name>Zn(2+)</name>
        <dbReference type="ChEBI" id="CHEBI:29105"/>
    </ligand>
</feature>
<feature type="binding site" evidence="1">
    <location>
        <position position="36"/>
    </location>
    <ligand>
        <name>Zn(2+)</name>
        <dbReference type="ChEBI" id="CHEBI:29105"/>
    </ligand>
</feature>
<feature type="binding site" evidence="1">
    <location>
        <position position="39"/>
    </location>
    <ligand>
        <name>Zn(2+)</name>
        <dbReference type="ChEBI" id="CHEBI:29105"/>
    </ligand>
</feature>
<accession>B5YDA8</accession>
<dbReference type="EMBL" id="CP001146">
    <property type="protein sequence ID" value="ACI19203.1"/>
    <property type="molecule type" value="Genomic_DNA"/>
</dbReference>
<dbReference type="RefSeq" id="WP_012547835.1">
    <property type="nucleotide sequence ID" value="NC_011297.1"/>
</dbReference>
<dbReference type="SMR" id="B5YDA8"/>
<dbReference type="STRING" id="309799.DICTH_0643"/>
<dbReference type="PaxDb" id="309799-DICTH_0643"/>
<dbReference type="KEGG" id="dth:DICTH_0643"/>
<dbReference type="eggNOG" id="COG0254">
    <property type="taxonomic scope" value="Bacteria"/>
</dbReference>
<dbReference type="HOGENOM" id="CLU_114306_4_3_0"/>
<dbReference type="OrthoDB" id="9803251at2"/>
<dbReference type="Proteomes" id="UP000001733">
    <property type="component" value="Chromosome"/>
</dbReference>
<dbReference type="GO" id="GO:1990904">
    <property type="term" value="C:ribonucleoprotein complex"/>
    <property type="evidence" value="ECO:0007669"/>
    <property type="project" value="UniProtKB-KW"/>
</dbReference>
<dbReference type="GO" id="GO:0005840">
    <property type="term" value="C:ribosome"/>
    <property type="evidence" value="ECO:0007669"/>
    <property type="project" value="UniProtKB-KW"/>
</dbReference>
<dbReference type="GO" id="GO:0046872">
    <property type="term" value="F:metal ion binding"/>
    <property type="evidence" value="ECO:0007669"/>
    <property type="project" value="UniProtKB-KW"/>
</dbReference>
<dbReference type="GO" id="GO:0019843">
    <property type="term" value="F:rRNA binding"/>
    <property type="evidence" value="ECO:0007669"/>
    <property type="project" value="UniProtKB-KW"/>
</dbReference>
<dbReference type="GO" id="GO:0003735">
    <property type="term" value="F:structural constituent of ribosome"/>
    <property type="evidence" value="ECO:0007669"/>
    <property type="project" value="InterPro"/>
</dbReference>
<dbReference type="GO" id="GO:0006412">
    <property type="term" value="P:translation"/>
    <property type="evidence" value="ECO:0007669"/>
    <property type="project" value="UniProtKB-UniRule"/>
</dbReference>
<dbReference type="Gene3D" id="4.10.830.30">
    <property type="entry name" value="Ribosomal protein L31"/>
    <property type="match status" value="1"/>
</dbReference>
<dbReference type="HAMAP" id="MF_00501">
    <property type="entry name" value="Ribosomal_bL31_1"/>
    <property type="match status" value="1"/>
</dbReference>
<dbReference type="InterPro" id="IPR034704">
    <property type="entry name" value="Ribosomal_bL28/bL31-like_sf"/>
</dbReference>
<dbReference type="InterPro" id="IPR002150">
    <property type="entry name" value="Ribosomal_bL31"/>
</dbReference>
<dbReference type="InterPro" id="IPR027491">
    <property type="entry name" value="Ribosomal_bL31_A"/>
</dbReference>
<dbReference type="InterPro" id="IPR042105">
    <property type="entry name" value="Ribosomal_bL31_sf"/>
</dbReference>
<dbReference type="NCBIfam" id="TIGR00105">
    <property type="entry name" value="L31"/>
    <property type="match status" value="1"/>
</dbReference>
<dbReference type="NCBIfam" id="NF000612">
    <property type="entry name" value="PRK00019.1"/>
    <property type="match status" value="1"/>
</dbReference>
<dbReference type="NCBIfam" id="NF001809">
    <property type="entry name" value="PRK00528.1"/>
    <property type="match status" value="1"/>
</dbReference>
<dbReference type="PANTHER" id="PTHR33280">
    <property type="entry name" value="50S RIBOSOMAL PROTEIN L31, CHLOROPLASTIC"/>
    <property type="match status" value="1"/>
</dbReference>
<dbReference type="PANTHER" id="PTHR33280:SF1">
    <property type="entry name" value="LARGE RIBOSOMAL SUBUNIT PROTEIN BL31C"/>
    <property type="match status" value="1"/>
</dbReference>
<dbReference type="Pfam" id="PF01197">
    <property type="entry name" value="Ribosomal_L31"/>
    <property type="match status" value="1"/>
</dbReference>
<dbReference type="PRINTS" id="PR01249">
    <property type="entry name" value="RIBOSOMALL31"/>
</dbReference>
<dbReference type="SUPFAM" id="SSF143800">
    <property type="entry name" value="L28p-like"/>
    <property type="match status" value="1"/>
</dbReference>
<dbReference type="PROSITE" id="PS01143">
    <property type="entry name" value="RIBOSOMAL_L31"/>
    <property type="match status" value="1"/>
</dbReference>
<name>RL31_DICT6</name>
<protein>
    <recommendedName>
        <fullName evidence="1">Large ribosomal subunit protein bL31</fullName>
    </recommendedName>
    <alternativeName>
        <fullName evidence="2">50S ribosomal protein L31</fullName>
    </alternativeName>
</protein>
<reference key="1">
    <citation type="journal article" date="2014" name="Genome Announc.">
        <title>Complete Genome Sequence of the Extreme Thermophile Dictyoglomus thermophilum H-6-12.</title>
        <authorList>
            <person name="Coil D.A."/>
            <person name="Badger J.H."/>
            <person name="Forberger H.C."/>
            <person name="Riggs F."/>
            <person name="Madupu R."/>
            <person name="Fedorova N."/>
            <person name="Ward N."/>
            <person name="Robb F.T."/>
            <person name="Eisen J.A."/>
        </authorList>
    </citation>
    <scope>NUCLEOTIDE SEQUENCE [LARGE SCALE GENOMIC DNA]</scope>
    <source>
        <strain>ATCC 35947 / DSM 3960 / H-6-12</strain>
    </source>
</reference>
<sequence>MKKGIHPELKKARIVCACGAVYETLSTKEYMTVEICSKCHPFFTGQRKFVDTEGRVERFAKKYNWEIK</sequence>
<keyword id="KW-0479">Metal-binding</keyword>
<keyword id="KW-0687">Ribonucleoprotein</keyword>
<keyword id="KW-0689">Ribosomal protein</keyword>
<keyword id="KW-0694">RNA-binding</keyword>
<keyword id="KW-0699">rRNA-binding</keyword>
<keyword id="KW-0862">Zinc</keyword>
<gene>
    <name evidence="1" type="primary">rpmE</name>
    <name type="ordered locus">DICTH_0643</name>
</gene>
<proteinExistence type="inferred from homology"/>